<name>TRUB_SALTY</name>
<dbReference type="EC" id="5.4.99.25" evidence="1"/>
<dbReference type="EMBL" id="AE006468">
    <property type="protein sequence ID" value="AAL22156.1"/>
    <property type="molecule type" value="Genomic_DNA"/>
</dbReference>
<dbReference type="RefSeq" id="NP_462197.1">
    <property type="nucleotide sequence ID" value="NC_003197.2"/>
</dbReference>
<dbReference type="RefSeq" id="WP_000089674.1">
    <property type="nucleotide sequence ID" value="NC_003197.2"/>
</dbReference>
<dbReference type="SMR" id="Q8ZLT2"/>
<dbReference type="STRING" id="99287.STM3284"/>
<dbReference type="PaxDb" id="99287-STM3284"/>
<dbReference type="GeneID" id="1254807"/>
<dbReference type="KEGG" id="stm:STM3284"/>
<dbReference type="PATRIC" id="fig|99287.12.peg.3483"/>
<dbReference type="HOGENOM" id="CLU_032087_0_3_6"/>
<dbReference type="OMA" id="VDKPSGF"/>
<dbReference type="PhylomeDB" id="Q8ZLT2"/>
<dbReference type="BioCyc" id="SENT99287:STM3284-MONOMER"/>
<dbReference type="Proteomes" id="UP000001014">
    <property type="component" value="Chromosome"/>
</dbReference>
<dbReference type="GO" id="GO:0009982">
    <property type="term" value="F:pseudouridine synthase activity"/>
    <property type="evidence" value="ECO:0000318"/>
    <property type="project" value="GO_Central"/>
</dbReference>
<dbReference type="GO" id="GO:0003723">
    <property type="term" value="F:RNA binding"/>
    <property type="evidence" value="ECO:0007669"/>
    <property type="project" value="InterPro"/>
</dbReference>
<dbReference type="GO" id="GO:0160148">
    <property type="term" value="F:tRNA pseudouridine(55) synthase activity"/>
    <property type="evidence" value="ECO:0007669"/>
    <property type="project" value="UniProtKB-EC"/>
</dbReference>
<dbReference type="GO" id="GO:1990481">
    <property type="term" value="P:mRNA pseudouridine synthesis"/>
    <property type="evidence" value="ECO:0000318"/>
    <property type="project" value="GO_Central"/>
</dbReference>
<dbReference type="GO" id="GO:0006400">
    <property type="term" value="P:tRNA modification"/>
    <property type="evidence" value="ECO:0000318"/>
    <property type="project" value="GO_Central"/>
</dbReference>
<dbReference type="GO" id="GO:0031119">
    <property type="term" value="P:tRNA pseudouridine synthesis"/>
    <property type="evidence" value="ECO:0007669"/>
    <property type="project" value="UniProtKB-UniRule"/>
</dbReference>
<dbReference type="CDD" id="cd02573">
    <property type="entry name" value="PseudoU_synth_EcTruB"/>
    <property type="match status" value="1"/>
</dbReference>
<dbReference type="CDD" id="cd21152">
    <property type="entry name" value="PUA_TruB_bacterial"/>
    <property type="match status" value="1"/>
</dbReference>
<dbReference type="FunFam" id="2.30.130.10:FF:000004">
    <property type="entry name" value="tRNA pseudouridine synthase B"/>
    <property type="match status" value="1"/>
</dbReference>
<dbReference type="FunFam" id="3.30.2350.10:FF:000003">
    <property type="entry name" value="tRNA pseudouridine synthase B"/>
    <property type="match status" value="1"/>
</dbReference>
<dbReference type="Gene3D" id="3.30.2350.10">
    <property type="entry name" value="Pseudouridine synthase"/>
    <property type="match status" value="1"/>
</dbReference>
<dbReference type="Gene3D" id="2.30.130.10">
    <property type="entry name" value="PUA domain"/>
    <property type="match status" value="1"/>
</dbReference>
<dbReference type="HAMAP" id="MF_01080">
    <property type="entry name" value="TruB_bact"/>
    <property type="match status" value="1"/>
</dbReference>
<dbReference type="InterPro" id="IPR020103">
    <property type="entry name" value="PsdUridine_synth_cat_dom_sf"/>
</dbReference>
<dbReference type="InterPro" id="IPR002501">
    <property type="entry name" value="PsdUridine_synth_N"/>
</dbReference>
<dbReference type="InterPro" id="IPR015947">
    <property type="entry name" value="PUA-like_sf"/>
</dbReference>
<dbReference type="InterPro" id="IPR036974">
    <property type="entry name" value="PUA_sf"/>
</dbReference>
<dbReference type="InterPro" id="IPR014780">
    <property type="entry name" value="tRNA_psdUridine_synth_TruB"/>
</dbReference>
<dbReference type="InterPro" id="IPR015240">
    <property type="entry name" value="tRNA_sdUridine_synth_fam1_C"/>
</dbReference>
<dbReference type="InterPro" id="IPR032819">
    <property type="entry name" value="TruB_C"/>
</dbReference>
<dbReference type="NCBIfam" id="TIGR00431">
    <property type="entry name" value="TruB"/>
    <property type="match status" value="1"/>
</dbReference>
<dbReference type="PANTHER" id="PTHR13767:SF2">
    <property type="entry name" value="PSEUDOURIDYLATE SYNTHASE TRUB1"/>
    <property type="match status" value="1"/>
</dbReference>
<dbReference type="PANTHER" id="PTHR13767">
    <property type="entry name" value="TRNA-PSEUDOURIDINE SYNTHASE"/>
    <property type="match status" value="1"/>
</dbReference>
<dbReference type="Pfam" id="PF09157">
    <property type="entry name" value="TruB-C_2"/>
    <property type="match status" value="1"/>
</dbReference>
<dbReference type="Pfam" id="PF16198">
    <property type="entry name" value="TruB_C_2"/>
    <property type="match status" value="1"/>
</dbReference>
<dbReference type="Pfam" id="PF01509">
    <property type="entry name" value="TruB_N"/>
    <property type="match status" value="1"/>
</dbReference>
<dbReference type="SUPFAM" id="SSF55120">
    <property type="entry name" value="Pseudouridine synthase"/>
    <property type="match status" value="1"/>
</dbReference>
<dbReference type="SUPFAM" id="SSF88697">
    <property type="entry name" value="PUA domain-like"/>
    <property type="match status" value="1"/>
</dbReference>
<keyword id="KW-0413">Isomerase</keyword>
<keyword id="KW-1185">Reference proteome</keyword>
<keyword id="KW-0819">tRNA processing</keyword>
<reference key="1">
    <citation type="journal article" date="2001" name="Nature">
        <title>Complete genome sequence of Salmonella enterica serovar Typhimurium LT2.</title>
        <authorList>
            <person name="McClelland M."/>
            <person name="Sanderson K.E."/>
            <person name="Spieth J."/>
            <person name="Clifton S.W."/>
            <person name="Latreille P."/>
            <person name="Courtney L."/>
            <person name="Porwollik S."/>
            <person name="Ali J."/>
            <person name="Dante M."/>
            <person name="Du F."/>
            <person name="Hou S."/>
            <person name="Layman D."/>
            <person name="Leonard S."/>
            <person name="Nguyen C."/>
            <person name="Scott K."/>
            <person name="Holmes A."/>
            <person name="Grewal N."/>
            <person name="Mulvaney E."/>
            <person name="Ryan E."/>
            <person name="Sun H."/>
            <person name="Florea L."/>
            <person name="Miller W."/>
            <person name="Stoneking T."/>
            <person name="Nhan M."/>
            <person name="Waterston R."/>
            <person name="Wilson R.K."/>
        </authorList>
    </citation>
    <scope>NUCLEOTIDE SEQUENCE [LARGE SCALE GENOMIC DNA]</scope>
    <source>
        <strain>LT2 / SGSC1412 / ATCC 700720</strain>
    </source>
</reference>
<proteinExistence type="inferred from homology"/>
<evidence type="ECO:0000255" key="1">
    <source>
        <dbReference type="HAMAP-Rule" id="MF_01080"/>
    </source>
</evidence>
<organism>
    <name type="scientific">Salmonella typhimurium (strain LT2 / SGSC1412 / ATCC 700720)</name>
    <dbReference type="NCBI Taxonomy" id="99287"/>
    <lineage>
        <taxon>Bacteria</taxon>
        <taxon>Pseudomonadati</taxon>
        <taxon>Pseudomonadota</taxon>
        <taxon>Gammaproteobacteria</taxon>
        <taxon>Enterobacterales</taxon>
        <taxon>Enterobacteriaceae</taxon>
        <taxon>Salmonella</taxon>
    </lineage>
</organism>
<protein>
    <recommendedName>
        <fullName evidence="1">tRNA pseudouridine synthase B</fullName>
        <ecNumber evidence="1">5.4.99.25</ecNumber>
    </recommendedName>
    <alternativeName>
        <fullName evidence="1">tRNA pseudouridine(55) synthase</fullName>
        <shortName evidence="1">Psi55 synthase</shortName>
    </alternativeName>
    <alternativeName>
        <fullName evidence="1">tRNA pseudouridylate synthase</fullName>
    </alternativeName>
    <alternativeName>
        <fullName evidence="1">tRNA-uridine isomerase</fullName>
    </alternativeName>
</protein>
<sequence length="314" mass="35042">MSRPRRRGRDIHGVLLLDKPQGMSSNDVLQKVKRIYNANRAGHTGALDPLATGMLPICLGEATKFSQYLLDSDKRYRVIARLGQRTDTSDADGQIVQERPVTFSAEQLASALETFRGDIEQIPSMYSALKYQGKKLYEYARQGIEVPREARPITVYELLFIRHEGNELELEVHCSKGTYIRTIIDDLGEKLGCGAHVTYLRRLTVSKYPVDRMVTLEHLQTLVAQAEQQGVPAAQLLDPLLMPMDSPASDYPVVNLPLTSSVYFKNGNPVRTTGAPLKGLVRVTEGEDDKFIGMGEIDDEGRVAPRRLVVEYPA</sequence>
<feature type="chain" id="PRO_0000121899" description="tRNA pseudouridine synthase B">
    <location>
        <begin position="1"/>
        <end position="314"/>
    </location>
</feature>
<feature type="active site" description="Nucleophile" evidence="1">
    <location>
        <position position="48"/>
    </location>
</feature>
<feature type="binding site" evidence="1">
    <location>
        <position position="43"/>
    </location>
    <ligand>
        <name>substrate</name>
    </ligand>
</feature>
<feature type="binding site" evidence="1">
    <location>
        <position position="76"/>
    </location>
    <ligand>
        <name>substrate</name>
    </ligand>
</feature>
<feature type="binding site" evidence="1">
    <location>
        <position position="179"/>
    </location>
    <ligand>
        <name>substrate</name>
    </ligand>
</feature>
<feature type="binding site" evidence="1">
    <location>
        <position position="200"/>
    </location>
    <ligand>
        <name>substrate</name>
    </ligand>
</feature>
<gene>
    <name evidence="1" type="primary">truB</name>
    <name type="ordered locus">STM3284</name>
</gene>
<comment type="function">
    <text evidence="1">Responsible for synthesis of pseudouridine from uracil-55 in the psi GC loop of transfer RNAs.</text>
</comment>
<comment type="catalytic activity">
    <reaction evidence="1">
        <text>uridine(55) in tRNA = pseudouridine(55) in tRNA</text>
        <dbReference type="Rhea" id="RHEA:42532"/>
        <dbReference type="Rhea" id="RHEA-COMP:10101"/>
        <dbReference type="Rhea" id="RHEA-COMP:10102"/>
        <dbReference type="ChEBI" id="CHEBI:65314"/>
        <dbReference type="ChEBI" id="CHEBI:65315"/>
        <dbReference type="EC" id="5.4.99.25"/>
    </reaction>
</comment>
<comment type="similarity">
    <text evidence="1">Belongs to the pseudouridine synthase TruB family. Type 1 subfamily.</text>
</comment>
<accession>Q8ZLT2</accession>